<keyword id="KW-1185">Reference proteome</keyword>
<keyword id="KW-0687">Ribonucleoprotein</keyword>
<keyword id="KW-0689">Ribosomal protein</keyword>
<keyword id="KW-0694">RNA-binding</keyword>
<keyword id="KW-0699">rRNA-binding</keyword>
<dbReference type="EMBL" id="CR522870">
    <property type="protein sequence ID" value="CAG35858.1"/>
    <property type="molecule type" value="Genomic_DNA"/>
</dbReference>
<dbReference type="RefSeq" id="WP_011188372.1">
    <property type="nucleotide sequence ID" value="NC_006138.1"/>
</dbReference>
<dbReference type="SMR" id="Q6AP66"/>
<dbReference type="STRING" id="177439.DP1129"/>
<dbReference type="KEGG" id="dps:DP1129"/>
<dbReference type="eggNOG" id="COG0091">
    <property type="taxonomic scope" value="Bacteria"/>
</dbReference>
<dbReference type="HOGENOM" id="CLU_083987_3_3_7"/>
<dbReference type="OrthoDB" id="9805969at2"/>
<dbReference type="Proteomes" id="UP000000602">
    <property type="component" value="Chromosome"/>
</dbReference>
<dbReference type="GO" id="GO:0022625">
    <property type="term" value="C:cytosolic large ribosomal subunit"/>
    <property type="evidence" value="ECO:0007669"/>
    <property type="project" value="TreeGrafter"/>
</dbReference>
<dbReference type="GO" id="GO:0019843">
    <property type="term" value="F:rRNA binding"/>
    <property type="evidence" value="ECO:0007669"/>
    <property type="project" value="UniProtKB-UniRule"/>
</dbReference>
<dbReference type="GO" id="GO:0003735">
    <property type="term" value="F:structural constituent of ribosome"/>
    <property type="evidence" value="ECO:0007669"/>
    <property type="project" value="InterPro"/>
</dbReference>
<dbReference type="GO" id="GO:0006412">
    <property type="term" value="P:translation"/>
    <property type="evidence" value="ECO:0007669"/>
    <property type="project" value="UniProtKB-UniRule"/>
</dbReference>
<dbReference type="CDD" id="cd00336">
    <property type="entry name" value="Ribosomal_L22"/>
    <property type="match status" value="1"/>
</dbReference>
<dbReference type="Gene3D" id="3.90.470.10">
    <property type="entry name" value="Ribosomal protein L22/L17"/>
    <property type="match status" value="1"/>
</dbReference>
<dbReference type="HAMAP" id="MF_01331_B">
    <property type="entry name" value="Ribosomal_uL22_B"/>
    <property type="match status" value="1"/>
</dbReference>
<dbReference type="InterPro" id="IPR001063">
    <property type="entry name" value="Ribosomal_uL22"/>
</dbReference>
<dbReference type="InterPro" id="IPR005727">
    <property type="entry name" value="Ribosomal_uL22_bac/chlpt-type"/>
</dbReference>
<dbReference type="InterPro" id="IPR047867">
    <property type="entry name" value="Ribosomal_uL22_bac/org-type"/>
</dbReference>
<dbReference type="InterPro" id="IPR018260">
    <property type="entry name" value="Ribosomal_uL22_CS"/>
</dbReference>
<dbReference type="InterPro" id="IPR036394">
    <property type="entry name" value="Ribosomal_uL22_sf"/>
</dbReference>
<dbReference type="NCBIfam" id="TIGR01044">
    <property type="entry name" value="rplV_bact"/>
    <property type="match status" value="1"/>
</dbReference>
<dbReference type="PANTHER" id="PTHR13501">
    <property type="entry name" value="CHLOROPLAST 50S RIBOSOMAL PROTEIN L22-RELATED"/>
    <property type="match status" value="1"/>
</dbReference>
<dbReference type="PANTHER" id="PTHR13501:SF8">
    <property type="entry name" value="LARGE RIBOSOMAL SUBUNIT PROTEIN UL22M"/>
    <property type="match status" value="1"/>
</dbReference>
<dbReference type="Pfam" id="PF00237">
    <property type="entry name" value="Ribosomal_L22"/>
    <property type="match status" value="1"/>
</dbReference>
<dbReference type="SUPFAM" id="SSF54843">
    <property type="entry name" value="Ribosomal protein L22"/>
    <property type="match status" value="1"/>
</dbReference>
<dbReference type="PROSITE" id="PS00464">
    <property type="entry name" value="RIBOSOMAL_L22"/>
    <property type="match status" value="1"/>
</dbReference>
<accession>Q6AP66</accession>
<reference key="1">
    <citation type="journal article" date="2004" name="Environ. Microbiol.">
        <title>The genome of Desulfotalea psychrophila, a sulfate-reducing bacterium from permanently cold Arctic sediments.</title>
        <authorList>
            <person name="Rabus R."/>
            <person name="Ruepp A."/>
            <person name="Frickey T."/>
            <person name="Rattei T."/>
            <person name="Fartmann B."/>
            <person name="Stark M."/>
            <person name="Bauer M."/>
            <person name="Zibat A."/>
            <person name="Lombardot T."/>
            <person name="Becker I."/>
            <person name="Amann J."/>
            <person name="Gellner K."/>
            <person name="Teeling H."/>
            <person name="Leuschner W.D."/>
            <person name="Gloeckner F.-O."/>
            <person name="Lupas A.N."/>
            <person name="Amann R."/>
            <person name="Klenk H.-P."/>
        </authorList>
    </citation>
    <scope>NUCLEOTIDE SEQUENCE [LARGE SCALE GENOMIC DNA]</scope>
    <source>
        <strain>DSM 12343 / LSv54</strain>
    </source>
</reference>
<sequence>MEARAVGKYIRISPQKARLVADVVRGMGVDQAITTLRFMPKKGAVILQKVIESALANATQDDQADVDNLYVKVITIDGGPSLKRIRPRAMGRATGIIKRTSHITVVLDEN</sequence>
<name>RL22_DESPS</name>
<organism>
    <name type="scientific">Desulfotalea psychrophila (strain LSv54 / DSM 12343)</name>
    <dbReference type="NCBI Taxonomy" id="177439"/>
    <lineage>
        <taxon>Bacteria</taxon>
        <taxon>Pseudomonadati</taxon>
        <taxon>Thermodesulfobacteriota</taxon>
        <taxon>Desulfobulbia</taxon>
        <taxon>Desulfobulbales</taxon>
        <taxon>Desulfocapsaceae</taxon>
        <taxon>Desulfotalea</taxon>
    </lineage>
</organism>
<evidence type="ECO:0000255" key="1">
    <source>
        <dbReference type="HAMAP-Rule" id="MF_01331"/>
    </source>
</evidence>
<evidence type="ECO:0000305" key="2"/>
<feature type="chain" id="PRO_0000243146" description="Large ribosomal subunit protein uL22">
    <location>
        <begin position="1"/>
        <end position="110"/>
    </location>
</feature>
<gene>
    <name evidence="1" type="primary">rplV</name>
    <name type="ordered locus">DP1129</name>
</gene>
<protein>
    <recommendedName>
        <fullName evidence="1">Large ribosomal subunit protein uL22</fullName>
    </recommendedName>
    <alternativeName>
        <fullName evidence="2">50S ribosomal protein L22</fullName>
    </alternativeName>
</protein>
<comment type="function">
    <text evidence="1">This protein binds specifically to 23S rRNA; its binding is stimulated by other ribosomal proteins, e.g. L4, L17, and L20. It is important during the early stages of 50S assembly. It makes multiple contacts with different domains of the 23S rRNA in the assembled 50S subunit and ribosome (By similarity).</text>
</comment>
<comment type="function">
    <text evidence="1">The globular domain of the protein is located near the polypeptide exit tunnel on the outside of the subunit, while an extended beta-hairpin is found that lines the wall of the exit tunnel in the center of the 70S ribosome.</text>
</comment>
<comment type="subunit">
    <text evidence="1">Part of the 50S ribosomal subunit.</text>
</comment>
<comment type="similarity">
    <text evidence="1">Belongs to the universal ribosomal protein uL22 family.</text>
</comment>
<proteinExistence type="inferred from homology"/>